<protein>
    <recommendedName>
        <fullName evidence="1">Methylthioribose-1-phosphate isomerase</fullName>
        <shortName evidence="1">M1Pi</shortName>
        <shortName evidence="1">MTR-1-P isomerase</shortName>
        <ecNumber evidence="1">5.3.1.23</ecNumber>
    </recommendedName>
    <alternativeName>
        <fullName evidence="1">S-methyl-5-thioribose-1-phosphate isomerase</fullName>
    </alternativeName>
</protein>
<dbReference type="EC" id="5.3.1.23" evidence="1"/>
<dbReference type="EMBL" id="AE016853">
    <property type="protein sequence ID" value="AAO55264.1"/>
    <property type="molecule type" value="Genomic_DNA"/>
</dbReference>
<dbReference type="RefSeq" id="NP_791569.1">
    <property type="nucleotide sequence ID" value="NC_004578.1"/>
</dbReference>
<dbReference type="RefSeq" id="WP_005766742.1">
    <property type="nucleotide sequence ID" value="NC_004578.1"/>
</dbReference>
<dbReference type="SMR" id="Q885T7"/>
<dbReference type="STRING" id="223283.PSPTO_1744"/>
<dbReference type="GeneID" id="1183381"/>
<dbReference type="KEGG" id="pst:PSPTO_1744"/>
<dbReference type="PATRIC" id="fig|223283.9.peg.1772"/>
<dbReference type="eggNOG" id="COG0182">
    <property type="taxonomic scope" value="Bacteria"/>
</dbReference>
<dbReference type="HOGENOM" id="CLU_016218_1_2_6"/>
<dbReference type="OrthoDB" id="9803436at2"/>
<dbReference type="PhylomeDB" id="Q885T7"/>
<dbReference type="UniPathway" id="UPA00904">
    <property type="reaction ID" value="UER00874"/>
</dbReference>
<dbReference type="Proteomes" id="UP000002515">
    <property type="component" value="Chromosome"/>
</dbReference>
<dbReference type="GO" id="GO:0046523">
    <property type="term" value="F:S-methyl-5-thioribose-1-phosphate isomerase activity"/>
    <property type="evidence" value="ECO:0007669"/>
    <property type="project" value="UniProtKB-UniRule"/>
</dbReference>
<dbReference type="GO" id="GO:0019509">
    <property type="term" value="P:L-methionine salvage from methylthioadenosine"/>
    <property type="evidence" value="ECO:0007669"/>
    <property type="project" value="UniProtKB-UniRule"/>
</dbReference>
<dbReference type="FunFam" id="1.20.120.420:FF:000008">
    <property type="entry name" value="Methylthioribose-1-phosphate isomerase"/>
    <property type="match status" value="1"/>
</dbReference>
<dbReference type="FunFam" id="3.40.50.10470:FF:000006">
    <property type="entry name" value="Methylthioribose-1-phosphate isomerase"/>
    <property type="match status" value="1"/>
</dbReference>
<dbReference type="Gene3D" id="1.20.120.420">
    <property type="entry name" value="translation initiation factor eif-2b, domain 1"/>
    <property type="match status" value="1"/>
</dbReference>
<dbReference type="Gene3D" id="3.40.50.10470">
    <property type="entry name" value="Translation initiation factor eif-2b, domain 2"/>
    <property type="match status" value="1"/>
</dbReference>
<dbReference type="HAMAP" id="MF_01678">
    <property type="entry name" value="Salvage_MtnA"/>
    <property type="match status" value="1"/>
</dbReference>
<dbReference type="InterPro" id="IPR000649">
    <property type="entry name" value="IF-2B-related"/>
</dbReference>
<dbReference type="InterPro" id="IPR005251">
    <property type="entry name" value="IF-M1Pi"/>
</dbReference>
<dbReference type="InterPro" id="IPR042529">
    <property type="entry name" value="IF_2B-like_C"/>
</dbReference>
<dbReference type="InterPro" id="IPR011559">
    <property type="entry name" value="Initiation_fac_2B_a/b/d"/>
</dbReference>
<dbReference type="InterPro" id="IPR027363">
    <property type="entry name" value="M1Pi_N"/>
</dbReference>
<dbReference type="InterPro" id="IPR037171">
    <property type="entry name" value="NagB/RpiA_transferase-like"/>
</dbReference>
<dbReference type="NCBIfam" id="TIGR00524">
    <property type="entry name" value="eIF-2B_rel"/>
    <property type="match status" value="1"/>
</dbReference>
<dbReference type="NCBIfam" id="NF004326">
    <property type="entry name" value="PRK05720.1"/>
    <property type="match status" value="1"/>
</dbReference>
<dbReference type="NCBIfam" id="TIGR00512">
    <property type="entry name" value="salvage_mtnA"/>
    <property type="match status" value="1"/>
</dbReference>
<dbReference type="PANTHER" id="PTHR43475">
    <property type="entry name" value="METHYLTHIORIBOSE-1-PHOSPHATE ISOMERASE"/>
    <property type="match status" value="1"/>
</dbReference>
<dbReference type="PANTHER" id="PTHR43475:SF1">
    <property type="entry name" value="METHYLTHIORIBOSE-1-PHOSPHATE ISOMERASE"/>
    <property type="match status" value="1"/>
</dbReference>
<dbReference type="Pfam" id="PF01008">
    <property type="entry name" value="IF-2B"/>
    <property type="match status" value="1"/>
</dbReference>
<dbReference type="SUPFAM" id="SSF100950">
    <property type="entry name" value="NagB/RpiA/CoA transferase-like"/>
    <property type="match status" value="1"/>
</dbReference>
<proteinExistence type="inferred from homology"/>
<keyword id="KW-0028">Amino-acid biosynthesis</keyword>
<keyword id="KW-0413">Isomerase</keyword>
<keyword id="KW-0486">Methionine biosynthesis</keyword>
<keyword id="KW-1185">Reference proteome</keyword>
<name>MTNA_PSESM</name>
<comment type="function">
    <text evidence="1">Catalyzes the interconversion of methylthioribose-1-phosphate (MTR-1-P) into methylthioribulose-1-phosphate (MTRu-1-P).</text>
</comment>
<comment type="catalytic activity">
    <reaction evidence="1">
        <text>5-(methylsulfanyl)-alpha-D-ribose 1-phosphate = 5-(methylsulfanyl)-D-ribulose 1-phosphate</text>
        <dbReference type="Rhea" id="RHEA:19989"/>
        <dbReference type="ChEBI" id="CHEBI:58533"/>
        <dbReference type="ChEBI" id="CHEBI:58548"/>
        <dbReference type="EC" id="5.3.1.23"/>
    </reaction>
</comment>
<comment type="pathway">
    <text evidence="1">Amino-acid biosynthesis; L-methionine biosynthesis via salvage pathway; L-methionine from S-methyl-5-thio-alpha-D-ribose 1-phosphate: step 1/6.</text>
</comment>
<comment type="similarity">
    <text evidence="2">Belongs to the eIF-2B alpha/beta/delta subunits family. MtnA subfamily.</text>
</comment>
<sequence>MRDRLLAAEKVKAIDWRDDALYLLDQRVLPFEEVWHRYTTAAGVAEAIRTMVVRGAPAIGISAAYGAVLGARARIAEGGDWYPALEEDMQLLADSRPTAVNLFWALNRIRDRLMRVKNGDNPLAALEAEAVAIHLSDREANLTMAQLGADLIRKHQGNLQTVLTHCNTGALATGGFGTALGVIRAAHLEGMIERVYADETRPWLQGSRLTAWELANEGIPVTLNADSAAAHLMRTKGITWVIVGADRITANGDVANKIGTYQLAVAAMHHGVRFMVVAPSSTIDMEMASGDDIIIEERDGRELLEVGGQRVGADVEAFNPVFDVTPADLIDAIVTEKGIVERPDTARMAQLMSRKHLH</sequence>
<gene>
    <name evidence="1" type="primary">mtnA</name>
    <name type="ordered locus">PSPTO_1744</name>
</gene>
<feature type="chain" id="PRO_0000156099" description="Methylthioribose-1-phosphate isomerase">
    <location>
        <begin position="1"/>
        <end position="358"/>
    </location>
</feature>
<feature type="active site" description="Proton donor" evidence="1">
    <location>
        <position position="246"/>
    </location>
</feature>
<feature type="binding site" evidence="1">
    <location>
        <begin position="54"/>
        <end position="56"/>
    </location>
    <ligand>
        <name>substrate</name>
    </ligand>
</feature>
<feature type="binding site" evidence="1">
    <location>
        <position position="96"/>
    </location>
    <ligand>
        <name>substrate</name>
    </ligand>
</feature>
<feature type="binding site" evidence="1">
    <location>
        <position position="205"/>
    </location>
    <ligand>
        <name>substrate</name>
    </ligand>
</feature>
<feature type="binding site" evidence="1">
    <location>
        <begin position="256"/>
        <end position="257"/>
    </location>
    <ligand>
        <name>substrate</name>
    </ligand>
</feature>
<feature type="site" description="Transition state stabilizer" evidence="1">
    <location>
        <position position="166"/>
    </location>
</feature>
<reference key="1">
    <citation type="journal article" date="2003" name="Proc. Natl. Acad. Sci. U.S.A.">
        <title>The complete genome sequence of the Arabidopsis and tomato pathogen Pseudomonas syringae pv. tomato DC3000.</title>
        <authorList>
            <person name="Buell C.R."/>
            <person name="Joardar V."/>
            <person name="Lindeberg M."/>
            <person name="Selengut J."/>
            <person name="Paulsen I.T."/>
            <person name="Gwinn M.L."/>
            <person name="Dodson R.J."/>
            <person name="DeBoy R.T."/>
            <person name="Durkin A.S."/>
            <person name="Kolonay J.F."/>
            <person name="Madupu R."/>
            <person name="Daugherty S.C."/>
            <person name="Brinkac L.M."/>
            <person name="Beanan M.J."/>
            <person name="Haft D.H."/>
            <person name="Nelson W.C."/>
            <person name="Davidsen T.M."/>
            <person name="Zafar N."/>
            <person name="Zhou L."/>
            <person name="Liu J."/>
            <person name="Yuan Q."/>
            <person name="Khouri H.M."/>
            <person name="Fedorova N.B."/>
            <person name="Tran B."/>
            <person name="Russell D."/>
            <person name="Berry K.J."/>
            <person name="Utterback T.R."/>
            <person name="Van Aken S.E."/>
            <person name="Feldblyum T.V."/>
            <person name="D'Ascenzo M."/>
            <person name="Deng W.-L."/>
            <person name="Ramos A.R."/>
            <person name="Alfano J.R."/>
            <person name="Cartinhour S."/>
            <person name="Chatterjee A.K."/>
            <person name="Delaney T.P."/>
            <person name="Lazarowitz S.G."/>
            <person name="Martin G.B."/>
            <person name="Schneider D.J."/>
            <person name="Tang X."/>
            <person name="Bender C.L."/>
            <person name="White O."/>
            <person name="Fraser C.M."/>
            <person name="Collmer A."/>
        </authorList>
    </citation>
    <scope>NUCLEOTIDE SEQUENCE [LARGE SCALE GENOMIC DNA]</scope>
    <source>
        <strain>ATCC BAA-871 / DC3000</strain>
    </source>
</reference>
<accession>Q885T7</accession>
<evidence type="ECO:0000255" key="1">
    <source>
        <dbReference type="HAMAP-Rule" id="MF_01678"/>
    </source>
</evidence>
<evidence type="ECO:0000305" key="2"/>
<organism>
    <name type="scientific">Pseudomonas syringae pv. tomato (strain ATCC BAA-871 / DC3000)</name>
    <dbReference type="NCBI Taxonomy" id="223283"/>
    <lineage>
        <taxon>Bacteria</taxon>
        <taxon>Pseudomonadati</taxon>
        <taxon>Pseudomonadota</taxon>
        <taxon>Gammaproteobacteria</taxon>
        <taxon>Pseudomonadales</taxon>
        <taxon>Pseudomonadaceae</taxon>
        <taxon>Pseudomonas</taxon>
    </lineage>
</organism>